<gene>
    <name evidence="1" type="primary">pyrG</name>
    <name type="ordered locus">SYNPCC7002_A1420</name>
</gene>
<dbReference type="EC" id="6.3.4.2" evidence="1"/>
<dbReference type="EMBL" id="CP000951">
    <property type="protein sequence ID" value="ACA99411.1"/>
    <property type="molecule type" value="Genomic_DNA"/>
</dbReference>
<dbReference type="RefSeq" id="WP_012307034.1">
    <property type="nucleotide sequence ID" value="NZ_JAHHPU010000007.1"/>
</dbReference>
<dbReference type="SMR" id="B1XMC5"/>
<dbReference type="STRING" id="32049.SYNPCC7002_A1420"/>
<dbReference type="MEROPS" id="C26.964"/>
<dbReference type="KEGG" id="syp:SYNPCC7002_A1420"/>
<dbReference type="eggNOG" id="COG0504">
    <property type="taxonomic scope" value="Bacteria"/>
</dbReference>
<dbReference type="HOGENOM" id="CLU_011675_5_0_3"/>
<dbReference type="UniPathway" id="UPA00159">
    <property type="reaction ID" value="UER00277"/>
</dbReference>
<dbReference type="Proteomes" id="UP000001688">
    <property type="component" value="Chromosome"/>
</dbReference>
<dbReference type="GO" id="GO:0005829">
    <property type="term" value="C:cytosol"/>
    <property type="evidence" value="ECO:0007669"/>
    <property type="project" value="TreeGrafter"/>
</dbReference>
<dbReference type="GO" id="GO:0005524">
    <property type="term" value="F:ATP binding"/>
    <property type="evidence" value="ECO:0007669"/>
    <property type="project" value="UniProtKB-KW"/>
</dbReference>
<dbReference type="GO" id="GO:0003883">
    <property type="term" value="F:CTP synthase activity"/>
    <property type="evidence" value="ECO:0007669"/>
    <property type="project" value="UniProtKB-UniRule"/>
</dbReference>
<dbReference type="GO" id="GO:0004359">
    <property type="term" value="F:glutaminase activity"/>
    <property type="evidence" value="ECO:0007669"/>
    <property type="project" value="RHEA"/>
</dbReference>
<dbReference type="GO" id="GO:0042802">
    <property type="term" value="F:identical protein binding"/>
    <property type="evidence" value="ECO:0007669"/>
    <property type="project" value="TreeGrafter"/>
</dbReference>
<dbReference type="GO" id="GO:0046872">
    <property type="term" value="F:metal ion binding"/>
    <property type="evidence" value="ECO:0007669"/>
    <property type="project" value="UniProtKB-KW"/>
</dbReference>
<dbReference type="GO" id="GO:0044210">
    <property type="term" value="P:'de novo' CTP biosynthetic process"/>
    <property type="evidence" value="ECO:0007669"/>
    <property type="project" value="UniProtKB-UniRule"/>
</dbReference>
<dbReference type="GO" id="GO:0019856">
    <property type="term" value="P:pyrimidine nucleobase biosynthetic process"/>
    <property type="evidence" value="ECO:0007669"/>
    <property type="project" value="TreeGrafter"/>
</dbReference>
<dbReference type="CDD" id="cd03113">
    <property type="entry name" value="CTPS_N"/>
    <property type="match status" value="1"/>
</dbReference>
<dbReference type="CDD" id="cd01746">
    <property type="entry name" value="GATase1_CTP_Synthase"/>
    <property type="match status" value="1"/>
</dbReference>
<dbReference type="FunFam" id="3.40.50.300:FF:000009">
    <property type="entry name" value="CTP synthase"/>
    <property type="match status" value="1"/>
</dbReference>
<dbReference type="FunFam" id="3.40.50.880:FF:000002">
    <property type="entry name" value="CTP synthase"/>
    <property type="match status" value="1"/>
</dbReference>
<dbReference type="Gene3D" id="3.40.50.880">
    <property type="match status" value="1"/>
</dbReference>
<dbReference type="Gene3D" id="3.40.50.300">
    <property type="entry name" value="P-loop containing nucleotide triphosphate hydrolases"/>
    <property type="match status" value="1"/>
</dbReference>
<dbReference type="HAMAP" id="MF_01227">
    <property type="entry name" value="PyrG"/>
    <property type="match status" value="1"/>
</dbReference>
<dbReference type="InterPro" id="IPR029062">
    <property type="entry name" value="Class_I_gatase-like"/>
</dbReference>
<dbReference type="InterPro" id="IPR004468">
    <property type="entry name" value="CTP_synthase"/>
</dbReference>
<dbReference type="InterPro" id="IPR017456">
    <property type="entry name" value="CTP_synthase_N"/>
</dbReference>
<dbReference type="InterPro" id="IPR017926">
    <property type="entry name" value="GATASE"/>
</dbReference>
<dbReference type="InterPro" id="IPR033828">
    <property type="entry name" value="GATase1_CTP_Synthase"/>
</dbReference>
<dbReference type="InterPro" id="IPR027417">
    <property type="entry name" value="P-loop_NTPase"/>
</dbReference>
<dbReference type="NCBIfam" id="NF003792">
    <property type="entry name" value="PRK05380.1"/>
    <property type="match status" value="1"/>
</dbReference>
<dbReference type="NCBIfam" id="TIGR00337">
    <property type="entry name" value="PyrG"/>
    <property type="match status" value="1"/>
</dbReference>
<dbReference type="PANTHER" id="PTHR11550">
    <property type="entry name" value="CTP SYNTHASE"/>
    <property type="match status" value="1"/>
</dbReference>
<dbReference type="PANTHER" id="PTHR11550:SF0">
    <property type="entry name" value="CTP SYNTHASE-RELATED"/>
    <property type="match status" value="1"/>
</dbReference>
<dbReference type="Pfam" id="PF06418">
    <property type="entry name" value="CTP_synth_N"/>
    <property type="match status" value="1"/>
</dbReference>
<dbReference type="Pfam" id="PF00117">
    <property type="entry name" value="GATase"/>
    <property type="match status" value="1"/>
</dbReference>
<dbReference type="SUPFAM" id="SSF52317">
    <property type="entry name" value="Class I glutamine amidotransferase-like"/>
    <property type="match status" value="1"/>
</dbReference>
<dbReference type="SUPFAM" id="SSF52540">
    <property type="entry name" value="P-loop containing nucleoside triphosphate hydrolases"/>
    <property type="match status" value="1"/>
</dbReference>
<dbReference type="PROSITE" id="PS51273">
    <property type="entry name" value="GATASE_TYPE_1"/>
    <property type="match status" value="1"/>
</dbReference>
<organism>
    <name type="scientific">Picosynechococcus sp. (strain ATCC 27264 / PCC 7002 / PR-6)</name>
    <name type="common">Agmenellum quadruplicatum</name>
    <dbReference type="NCBI Taxonomy" id="32049"/>
    <lineage>
        <taxon>Bacteria</taxon>
        <taxon>Bacillati</taxon>
        <taxon>Cyanobacteriota</taxon>
        <taxon>Cyanophyceae</taxon>
        <taxon>Oscillatoriophycideae</taxon>
        <taxon>Chroococcales</taxon>
        <taxon>Geminocystaceae</taxon>
        <taxon>Picosynechococcus</taxon>
    </lineage>
</organism>
<keyword id="KW-0067">ATP-binding</keyword>
<keyword id="KW-0315">Glutamine amidotransferase</keyword>
<keyword id="KW-0436">Ligase</keyword>
<keyword id="KW-0460">Magnesium</keyword>
<keyword id="KW-0479">Metal-binding</keyword>
<keyword id="KW-0547">Nucleotide-binding</keyword>
<keyword id="KW-0665">Pyrimidine biosynthesis</keyword>
<keyword id="KW-1185">Reference proteome</keyword>
<protein>
    <recommendedName>
        <fullName evidence="1">CTP synthase</fullName>
        <ecNumber evidence="1">6.3.4.2</ecNumber>
    </recommendedName>
    <alternativeName>
        <fullName evidence="1">Cytidine 5'-triphosphate synthase</fullName>
    </alternativeName>
    <alternativeName>
        <fullName evidence="1">Cytidine triphosphate synthetase</fullName>
        <shortName evidence="1">CTP synthetase</shortName>
        <shortName evidence="1">CTPS</shortName>
    </alternativeName>
    <alternativeName>
        <fullName evidence="1">UTP--ammonia ligase</fullName>
    </alternativeName>
</protein>
<evidence type="ECO:0000255" key="1">
    <source>
        <dbReference type="HAMAP-Rule" id="MF_01227"/>
    </source>
</evidence>
<evidence type="ECO:0000256" key="2">
    <source>
        <dbReference type="SAM" id="MobiDB-lite"/>
    </source>
</evidence>
<comment type="function">
    <text evidence="1">Catalyzes the ATP-dependent amination of UTP to CTP with either L-glutamine or ammonia as the source of nitrogen. Regulates intracellular CTP levels through interactions with the four ribonucleotide triphosphates.</text>
</comment>
<comment type="catalytic activity">
    <reaction evidence="1">
        <text>UTP + L-glutamine + ATP + H2O = CTP + L-glutamate + ADP + phosphate + 2 H(+)</text>
        <dbReference type="Rhea" id="RHEA:26426"/>
        <dbReference type="ChEBI" id="CHEBI:15377"/>
        <dbReference type="ChEBI" id="CHEBI:15378"/>
        <dbReference type="ChEBI" id="CHEBI:29985"/>
        <dbReference type="ChEBI" id="CHEBI:30616"/>
        <dbReference type="ChEBI" id="CHEBI:37563"/>
        <dbReference type="ChEBI" id="CHEBI:43474"/>
        <dbReference type="ChEBI" id="CHEBI:46398"/>
        <dbReference type="ChEBI" id="CHEBI:58359"/>
        <dbReference type="ChEBI" id="CHEBI:456216"/>
        <dbReference type="EC" id="6.3.4.2"/>
    </reaction>
</comment>
<comment type="catalytic activity">
    <reaction evidence="1">
        <text>L-glutamine + H2O = L-glutamate + NH4(+)</text>
        <dbReference type="Rhea" id="RHEA:15889"/>
        <dbReference type="ChEBI" id="CHEBI:15377"/>
        <dbReference type="ChEBI" id="CHEBI:28938"/>
        <dbReference type="ChEBI" id="CHEBI:29985"/>
        <dbReference type="ChEBI" id="CHEBI:58359"/>
    </reaction>
</comment>
<comment type="catalytic activity">
    <reaction evidence="1">
        <text>UTP + NH4(+) + ATP = CTP + ADP + phosphate + 2 H(+)</text>
        <dbReference type="Rhea" id="RHEA:16597"/>
        <dbReference type="ChEBI" id="CHEBI:15378"/>
        <dbReference type="ChEBI" id="CHEBI:28938"/>
        <dbReference type="ChEBI" id="CHEBI:30616"/>
        <dbReference type="ChEBI" id="CHEBI:37563"/>
        <dbReference type="ChEBI" id="CHEBI:43474"/>
        <dbReference type="ChEBI" id="CHEBI:46398"/>
        <dbReference type="ChEBI" id="CHEBI:456216"/>
    </reaction>
</comment>
<comment type="activity regulation">
    <text evidence="1">Allosterically activated by GTP, when glutamine is the substrate; GTP has no effect on the reaction when ammonia is the substrate. The allosteric effector GTP functions by stabilizing the protein conformation that binds the tetrahedral intermediate(s) formed during glutamine hydrolysis. Inhibited by the product CTP, via allosteric rather than competitive inhibition.</text>
</comment>
<comment type="pathway">
    <text evidence="1">Pyrimidine metabolism; CTP biosynthesis via de novo pathway; CTP from UDP: step 2/2.</text>
</comment>
<comment type="subunit">
    <text evidence="1">Homotetramer.</text>
</comment>
<comment type="miscellaneous">
    <text evidence="1">CTPSs have evolved a hybrid strategy for distinguishing between UTP and CTP. The overlapping regions of the product feedback inhibitory and substrate sites recognize a common feature in both compounds, the triphosphate moiety. To differentiate isosteric substrate and product pyrimidine rings, an additional pocket far from the expected kinase/ligase catalytic site, specifically recognizes the cytosine and ribose portions of the product inhibitor.</text>
</comment>
<comment type="similarity">
    <text evidence="1">Belongs to the CTP synthase family.</text>
</comment>
<reference key="1">
    <citation type="submission" date="2008-02" db="EMBL/GenBank/DDBJ databases">
        <title>Complete sequence of Synechococcus sp. PCC 7002.</title>
        <authorList>
            <person name="Li T."/>
            <person name="Zhao J."/>
            <person name="Zhao C."/>
            <person name="Liu Z."/>
            <person name="Zhao F."/>
            <person name="Marquardt J."/>
            <person name="Nomura C.T."/>
            <person name="Persson S."/>
            <person name="Detter J.C."/>
            <person name="Richardson P.M."/>
            <person name="Lanz C."/>
            <person name="Schuster S.C."/>
            <person name="Wang J."/>
            <person name="Li S."/>
            <person name="Huang X."/>
            <person name="Cai T."/>
            <person name="Yu Z."/>
            <person name="Luo J."/>
            <person name="Zhao J."/>
            <person name="Bryant D.A."/>
        </authorList>
    </citation>
    <scope>NUCLEOTIDE SEQUENCE [LARGE SCALE GENOMIC DNA]</scope>
    <source>
        <strain>ATCC 27264 / PCC 7002 / PR-6</strain>
    </source>
</reference>
<sequence>MAKFIFVTGGVVSSIGKGIVAASLGRLLKSRDYSVSILKLDPYINVDPGTMSPFQHGEVFVTEDGAETDLDLGHYERFTDTSMSRLNSVTTGSIYQAVINKERRGDYQGGTVQVIPHITNEIKERIFRVAENTNPDFVITEIGGTVGDIESLPFLEAIRQFRKEAGRDNVLYMHVTLIPWISSAGEMKTKPTQHSVKELRSIGIQPDVLVCRCDRPLPQGQREKISEFCNVPEEQVITSQDASSIYEVPLMLEREGLAEQTLKLLRMEPRQPNLEQWQNLVERMKRPNRHMDIAIVGKYVQLNDAYLSVVESLGHAAIANDMDIKLHWVNAEDIEKHGASMYLADMAGIVVPGGFGLRGVDGKVAAIEYARLNQIPFLGLCLGMQSSVIEWARNVAKLEDAHSAEFNPEAKNPVINLLPEQRDVVDLGGTMRLGLYPCRLTPDTLTYQLYGQEVIYERHRHRYEFNNAYRSLFLETGYQVSGTSPDGRLVEIIEYADHPFFIATQFHPEFQSRPNHPHPLFFGFIQAAGNHKSQPISDELDNQSTEMSISLS</sequence>
<name>PYRG_PICP2</name>
<accession>B1XMC5</accession>
<feature type="chain" id="PRO_1000139593" description="CTP synthase">
    <location>
        <begin position="1"/>
        <end position="552"/>
    </location>
</feature>
<feature type="domain" description="Glutamine amidotransferase type-1" evidence="1">
    <location>
        <begin position="292"/>
        <end position="534"/>
    </location>
</feature>
<feature type="region of interest" description="Amidoligase domain" evidence="1">
    <location>
        <begin position="1"/>
        <end position="267"/>
    </location>
</feature>
<feature type="region of interest" description="Disordered" evidence="2">
    <location>
        <begin position="533"/>
        <end position="552"/>
    </location>
</feature>
<feature type="active site" description="Nucleophile; for glutamine hydrolysis" evidence="1">
    <location>
        <position position="381"/>
    </location>
</feature>
<feature type="active site" evidence="1">
    <location>
        <position position="507"/>
    </location>
</feature>
<feature type="active site" evidence="1">
    <location>
        <position position="509"/>
    </location>
</feature>
<feature type="binding site" evidence="1">
    <location>
        <position position="13"/>
    </location>
    <ligand>
        <name>CTP</name>
        <dbReference type="ChEBI" id="CHEBI:37563"/>
        <note>allosteric inhibitor</note>
    </ligand>
</feature>
<feature type="binding site" evidence="1">
    <location>
        <position position="13"/>
    </location>
    <ligand>
        <name>UTP</name>
        <dbReference type="ChEBI" id="CHEBI:46398"/>
    </ligand>
</feature>
<feature type="binding site" evidence="1">
    <location>
        <begin position="14"/>
        <end position="19"/>
    </location>
    <ligand>
        <name>ATP</name>
        <dbReference type="ChEBI" id="CHEBI:30616"/>
    </ligand>
</feature>
<feature type="binding site" evidence="1">
    <location>
        <position position="71"/>
    </location>
    <ligand>
        <name>ATP</name>
        <dbReference type="ChEBI" id="CHEBI:30616"/>
    </ligand>
</feature>
<feature type="binding site" evidence="1">
    <location>
        <position position="71"/>
    </location>
    <ligand>
        <name>Mg(2+)</name>
        <dbReference type="ChEBI" id="CHEBI:18420"/>
    </ligand>
</feature>
<feature type="binding site" evidence="1">
    <location>
        <position position="141"/>
    </location>
    <ligand>
        <name>Mg(2+)</name>
        <dbReference type="ChEBI" id="CHEBI:18420"/>
    </ligand>
</feature>
<feature type="binding site" evidence="1">
    <location>
        <begin position="148"/>
        <end position="150"/>
    </location>
    <ligand>
        <name>CTP</name>
        <dbReference type="ChEBI" id="CHEBI:37563"/>
        <note>allosteric inhibitor</note>
    </ligand>
</feature>
<feature type="binding site" evidence="1">
    <location>
        <begin position="188"/>
        <end position="193"/>
    </location>
    <ligand>
        <name>CTP</name>
        <dbReference type="ChEBI" id="CHEBI:37563"/>
        <note>allosteric inhibitor</note>
    </ligand>
</feature>
<feature type="binding site" evidence="1">
    <location>
        <begin position="188"/>
        <end position="193"/>
    </location>
    <ligand>
        <name>UTP</name>
        <dbReference type="ChEBI" id="CHEBI:46398"/>
    </ligand>
</feature>
<feature type="binding site" evidence="1">
    <location>
        <position position="224"/>
    </location>
    <ligand>
        <name>CTP</name>
        <dbReference type="ChEBI" id="CHEBI:37563"/>
        <note>allosteric inhibitor</note>
    </ligand>
</feature>
<feature type="binding site" evidence="1">
    <location>
        <position position="224"/>
    </location>
    <ligand>
        <name>UTP</name>
        <dbReference type="ChEBI" id="CHEBI:46398"/>
    </ligand>
</feature>
<feature type="binding site" evidence="1">
    <location>
        <position position="354"/>
    </location>
    <ligand>
        <name>L-glutamine</name>
        <dbReference type="ChEBI" id="CHEBI:58359"/>
    </ligand>
</feature>
<feature type="binding site" evidence="1">
    <location>
        <begin position="382"/>
        <end position="385"/>
    </location>
    <ligand>
        <name>L-glutamine</name>
        <dbReference type="ChEBI" id="CHEBI:58359"/>
    </ligand>
</feature>
<feature type="binding site" evidence="1">
    <location>
        <position position="405"/>
    </location>
    <ligand>
        <name>L-glutamine</name>
        <dbReference type="ChEBI" id="CHEBI:58359"/>
    </ligand>
</feature>
<feature type="binding site" evidence="1">
    <location>
        <position position="462"/>
    </location>
    <ligand>
        <name>L-glutamine</name>
        <dbReference type="ChEBI" id="CHEBI:58359"/>
    </ligand>
</feature>
<proteinExistence type="inferred from homology"/>